<keyword id="KW-1015">Disulfide bond</keyword>
<keyword id="KW-0872">Ion channel impairing toxin</keyword>
<keyword id="KW-0528">Neurotoxin</keyword>
<keyword id="KW-0632">Potassium channel impairing toxin</keyword>
<keyword id="KW-0638">Presynaptic neurotoxin</keyword>
<keyword id="KW-0964">Secreted</keyword>
<keyword id="KW-0732">Signal</keyword>
<keyword id="KW-0800">Toxin</keyword>
<keyword id="KW-1220">Voltage-gated potassium channel impairing toxin</keyword>
<sequence length="85" mass="9506">MSSGGLLLLLGLLTLWAELTPISSRERHPDCDKPPDTGRCGNNVRAFYYKPSTNKCVQFIYGGCNANGNHFKSDHLCRCQCREND</sequence>
<organism>
    <name type="scientific">Bungarus fasciatus</name>
    <name type="common">Banded krait</name>
    <name type="synonym">Pseudoboa fasciata</name>
    <dbReference type="NCBI Taxonomy" id="8613"/>
    <lineage>
        <taxon>Eukaryota</taxon>
        <taxon>Metazoa</taxon>
        <taxon>Chordata</taxon>
        <taxon>Craniata</taxon>
        <taxon>Vertebrata</taxon>
        <taxon>Euteleostomi</taxon>
        <taxon>Lepidosauria</taxon>
        <taxon>Squamata</taxon>
        <taxon>Bifurcata</taxon>
        <taxon>Unidentata</taxon>
        <taxon>Episquamata</taxon>
        <taxon>Toxicofera</taxon>
        <taxon>Serpentes</taxon>
        <taxon>Colubroidea</taxon>
        <taxon>Elapidae</taxon>
        <taxon>Bungarinae</taxon>
        <taxon>Bungarus</taxon>
    </lineage>
</organism>
<dbReference type="EMBL" id="EU220209">
    <property type="protein sequence ID" value="ABY71038.1"/>
    <property type="molecule type" value="mRNA"/>
</dbReference>
<dbReference type="SMR" id="B2KTG3"/>
<dbReference type="GO" id="GO:0005615">
    <property type="term" value="C:extracellular space"/>
    <property type="evidence" value="ECO:0007669"/>
    <property type="project" value="TreeGrafter"/>
</dbReference>
<dbReference type="GO" id="GO:0015459">
    <property type="term" value="F:potassium channel regulator activity"/>
    <property type="evidence" value="ECO:0007669"/>
    <property type="project" value="UniProtKB-KW"/>
</dbReference>
<dbReference type="GO" id="GO:0004867">
    <property type="term" value="F:serine-type endopeptidase inhibitor activity"/>
    <property type="evidence" value="ECO:0007669"/>
    <property type="project" value="InterPro"/>
</dbReference>
<dbReference type="GO" id="GO:0090729">
    <property type="term" value="F:toxin activity"/>
    <property type="evidence" value="ECO:0007669"/>
    <property type="project" value="UniProtKB-KW"/>
</dbReference>
<dbReference type="Gene3D" id="4.10.410.10">
    <property type="entry name" value="Pancreatic trypsin inhibitor Kunitz domain"/>
    <property type="match status" value="1"/>
</dbReference>
<dbReference type="InterPro" id="IPR002223">
    <property type="entry name" value="Kunitz_BPTI"/>
</dbReference>
<dbReference type="InterPro" id="IPR036880">
    <property type="entry name" value="Kunitz_BPTI_sf"/>
</dbReference>
<dbReference type="InterPro" id="IPR020901">
    <property type="entry name" value="Prtase_inh_Kunz-CS"/>
</dbReference>
<dbReference type="InterPro" id="IPR050098">
    <property type="entry name" value="TFPI/VKTCI-like"/>
</dbReference>
<dbReference type="PANTHER" id="PTHR10083:SF374">
    <property type="entry name" value="BPTI_KUNITZ INHIBITOR DOMAIN-CONTAINING PROTEIN"/>
    <property type="match status" value="1"/>
</dbReference>
<dbReference type="PANTHER" id="PTHR10083">
    <property type="entry name" value="KUNITZ-TYPE PROTEASE INHIBITOR-RELATED"/>
    <property type="match status" value="1"/>
</dbReference>
<dbReference type="Pfam" id="PF00014">
    <property type="entry name" value="Kunitz_BPTI"/>
    <property type="match status" value="1"/>
</dbReference>
<dbReference type="PRINTS" id="PR00759">
    <property type="entry name" value="BASICPTASE"/>
</dbReference>
<dbReference type="SMART" id="SM00131">
    <property type="entry name" value="KU"/>
    <property type="match status" value="1"/>
</dbReference>
<dbReference type="SUPFAM" id="SSF57362">
    <property type="entry name" value="BPTI-like"/>
    <property type="match status" value="1"/>
</dbReference>
<dbReference type="PROSITE" id="PS00280">
    <property type="entry name" value="BPTI_KUNITZ_1"/>
    <property type="match status" value="1"/>
</dbReference>
<dbReference type="PROSITE" id="PS50279">
    <property type="entry name" value="BPTI_KUNITZ_2"/>
    <property type="match status" value="1"/>
</dbReference>
<protein>
    <recommendedName>
        <fullName>Kunitz-type serine protease inhibitor homolog beta-bungarotoxin BF B2 chain</fullName>
    </recommendedName>
</protein>
<proteinExistence type="evidence at transcript level"/>
<comment type="function">
    <text evidence="1">Beta-1-bungarotoxin is a presynaptic neurotoxin of the venom. The B chain is homologous to venom basic protease inhibitors but has no protease inhibitor activity and blocks voltage-gated potassium channels (Kv) (By similarity).</text>
</comment>
<comment type="subunit">
    <text evidence="1">Heterodimer; disulfide-linked. The A chains have phospholipase A2 activity and the B chains show homology with the basic protease inhibitors (By similarity).</text>
</comment>
<comment type="subcellular location">
    <subcellularLocation>
        <location evidence="1">Secreted</location>
    </subcellularLocation>
</comment>
<comment type="tissue specificity">
    <text>Expressed by the venom gland.</text>
</comment>
<comment type="similarity">
    <text evidence="3">Belongs to the venom Kunitz-type family.</text>
</comment>
<reference key="1">
    <citation type="journal article" date="2008" name="Peptides">
        <title>A novel serine protease inhibitor from Bungarus fasciatus venom.</title>
        <authorList>
            <person name="Lu J."/>
            <person name="Yang H."/>
            <person name="Yu H."/>
            <person name="Gao W."/>
            <person name="Lai R."/>
            <person name="Liu J."/>
            <person name="Liang X."/>
        </authorList>
    </citation>
    <scope>NUCLEOTIDE SEQUENCE [MRNA]</scope>
    <source>
        <tissue>Venom gland</tissue>
    </source>
</reference>
<evidence type="ECO:0000250" key="1"/>
<evidence type="ECO:0000255" key="2">
    <source>
        <dbReference type="PROSITE-ProRule" id="PRU00031"/>
    </source>
</evidence>
<evidence type="ECO:0000305" key="3"/>
<name>VKTH2_BUNFA</name>
<feature type="signal peptide" evidence="1">
    <location>
        <begin position="1"/>
        <end position="24"/>
    </location>
</feature>
<feature type="chain" id="PRO_0000376876" description="Kunitz-type serine protease inhibitor homolog beta-bungarotoxin BF B2 chain">
    <location>
        <begin position="25"/>
        <end position="85"/>
    </location>
</feature>
<feature type="domain" description="BPTI/Kunitz inhibitor" evidence="2">
    <location>
        <begin position="31"/>
        <end position="81"/>
    </location>
</feature>
<feature type="disulfide bond" evidence="2">
    <location>
        <begin position="31"/>
        <end position="81"/>
    </location>
</feature>
<feature type="disulfide bond" evidence="2">
    <location>
        <begin position="40"/>
        <end position="64"/>
    </location>
</feature>
<feature type="disulfide bond" evidence="2">
    <location>
        <begin position="56"/>
        <end position="77"/>
    </location>
</feature>
<feature type="disulfide bond" description="Interchain (with an A chain)" evidence="2">
    <location>
        <position position="79"/>
    </location>
</feature>
<accession>B2KTG3</accession>